<sequence>MLMRKKKLLSRISFGSLFLLCGTILSACTWIQANLRNLLKETTGKDFDLSKAIKIPEGRQNLINSLKKSYEVNPKDTTKLLLDAWKQSSEEGKLGIADLDFDQVTNPTEKDPFKNGAKGRAFRHWISKY</sequence>
<protein>
    <recommendedName>
        <fullName>Uncharacterized lipoprotein MPN_654</fullName>
    </recommendedName>
</protein>
<organism>
    <name type="scientific">Mycoplasma pneumoniae (strain ATCC 29342 / M129 / Subtype 1)</name>
    <name type="common">Mycoplasmoides pneumoniae</name>
    <dbReference type="NCBI Taxonomy" id="272634"/>
    <lineage>
        <taxon>Bacteria</taxon>
        <taxon>Bacillati</taxon>
        <taxon>Mycoplasmatota</taxon>
        <taxon>Mycoplasmoidales</taxon>
        <taxon>Mycoplasmoidaceae</taxon>
        <taxon>Mycoplasmoides</taxon>
    </lineage>
</organism>
<keyword id="KW-1003">Cell membrane</keyword>
<keyword id="KW-0449">Lipoprotein</keyword>
<keyword id="KW-0472">Membrane</keyword>
<keyword id="KW-0564">Palmitate</keyword>
<keyword id="KW-1185">Reference proteome</keyword>
<keyword id="KW-0732">Signal</keyword>
<reference key="1">
    <citation type="journal article" date="1996" name="Nucleic Acids Res.">
        <title>Complete sequence analysis of the genome of the bacterium Mycoplasma pneumoniae.</title>
        <authorList>
            <person name="Himmelreich R."/>
            <person name="Hilbert H."/>
            <person name="Plagens H."/>
            <person name="Pirkl E."/>
            <person name="Li B.-C."/>
            <person name="Herrmann R."/>
        </authorList>
    </citation>
    <scope>NUCLEOTIDE SEQUENCE [LARGE SCALE GENOMIC DNA]</scope>
    <source>
        <strain>ATCC 29342 / M129 / Subtype 1</strain>
    </source>
</reference>
<dbReference type="EMBL" id="U00089">
    <property type="protein sequence ID" value="AAB95836.1"/>
    <property type="molecule type" value="Genomic_DNA"/>
</dbReference>
<dbReference type="PIR" id="S73514">
    <property type="entry name" value="S73514"/>
</dbReference>
<dbReference type="RefSeq" id="NP_110343.1">
    <property type="nucleotide sequence ID" value="NC_000912.1"/>
</dbReference>
<dbReference type="STRING" id="272634.MPN_654"/>
<dbReference type="EnsemblBacteria" id="AAB95836">
    <property type="protein sequence ID" value="AAB95836"/>
    <property type="gene ID" value="MPN_654"/>
</dbReference>
<dbReference type="KEGG" id="mpn:MPN_654"/>
<dbReference type="PATRIC" id="fig|272634.6.peg.719"/>
<dbReference type="HOGENOM" id="CLU_159944_0_0_14"/>
<dbReference type="BioCyc" id="MPNE272634:G1GJ3-1045-MONOMER"/>
<dbReference type="Proteomes" id="UP000000808">
    <property type="component" value="Chromosome"/>
</dbReference>
<dbReference type="GO" id="GO:0005886">
    <property type="term" value="C:plasma membrane"/>
    <property type="evidence" value="ECO:0007669"/>
    <property type="project" value="UniProtKB-SubCell"/>
</dbReference>
<dbReference type="InterPro" id="IPR001595">
    <property type="entry name" value="Lipoprotein_3"/>
</dbReference>
<dbReference type="Pfam" id="PF00938">
    <property type="entry name" value="Lipoprotein_3"/>
    <property type="match status" value="1"/>
</dbReference>
<dbReference type="PROSITE" id="PS51257">
    <property type="entry name" value="PROKAR_LIPOPROTEIN"/>
    <property type="match status" value="1"/>
</dbReference>
<gene>
    <name type="ordered locus">MPN_654</name>
    <name type="ORF">E09_orf129</name>
    <name type="ORF">MP188</name>
</gene>
<comment type="subcellular location">
    <subcellularLocation>
        <location evidence="1">Cell membrane</location>
        <topology evidence="1">Lipid-anchor</topology>
    </subcellularLocation>
</comment>
<comment type="similarity">
    <text evidence="2">Belongs to the MG439/MG440 family.</text>
</comment>
<evidence type="ECO:0000255" key="1">
    <source>
        <dbReference type="PROSITE-ProRule" id="PRU00303"/>
    </source>
</evidence>
<evidence type="ECO:0000305" key="2"/>
<proteinExistence type="inferred from homology"/>
<accession>P75137</accession>
<feature type="signal peptide" evidence="1">
    <location>
        <begin position="1"/>
        <end position="27"/>
    </location>
</feature>
<feature type="chain" id="PRO_0000014064" description="Uncharacterized lipoprotein MPN_654">
    <location>
        <begin position="28"/>
        <end position="129"/>
    </location>
</feature>
<feature type="lipid moiety-binding region" description="N-palmitoyl cysteine" evidence="1">
    <location>
        <position position="28"/>
    </location>
</feature>
<feature type="lipid moiety-binding region" description="S-diacylglycerol cysteine" evidence="1">
    <location>
        <position position="28"/>
    </location>
</feature>
<name>Y654_MYCPN</name>